<evidence type="ECO:0000250" key="1"/>
<evidence type="ECO:0000250" key="2">
    <source>
        <dbReference type="UniProtKB" id="P03315"/>
    </source>
</evidence>
<evidence type="ECO:0000250" key="3">
    <source>
        <dbReference type="UniProtKB" id="P03316"/>
    </source>
</evidence>
<evidence type="ECO:0000250" key="4">
    <source>
        <dbReference type="UniProtKB" id="P0DOK0"/>
    </source>
</evidence>
<evidence type="ECO:0000250" key="5">
    <source>
        <dbReference type="UniProtKB" id="P0DOK1"/>
    </source>
</evidence>
<evidence type="ECO:0000250" key="6">
    <source>
        <dbReference type="UniProtKB" id="P27284"/>
    </source>
</evidence>
<evidence type="ECO:0000250" key="7">
    <source>
        <dbReference type="UniProtKB" id="Q8JUX5"/>
    </source>
</evidence>
<evidence type="ECO:0000255" key="8"/>
<evidence type="ECO:0000255" key="9">
    <source>
        <dbReference type="PROSITE-ProRule" id="PRU01027"/>
    </source>
</evidence>
<evidence type="ECO:0000256" key="10">
    <source>
        <dbReference type="SAM" id="MobiDB-lite"/>
    </source>
</evidence>
<evidence type="ECO:0000269" key="11">
    <source>
    </source>
</evidence>
<evidence type="ECO:0000269" key="12">
    <source>
    </source>
</evidence>
<evidence type="ECO:0000269" key="13">
    <source>
    </source>
</evidence>
<evidence type="ECO:0000269" key="14">
    <source>
    </source>
</evidence>
<evidence type="ECO:0000269" key="15">
    <source>
    </source>
</evidence>
<evidence type="ECO:0000305" key="16"/>
<organismHost>
    <name type="scientific">Aedes</name>
    <dbReference type="NCBI Taxonomy" id="7158"/>
</organismHost>
<organismHost>
    <name type="scientific">Atelerix albiventris</name>
    <name type="common">Middle-African hedgehog</name>
    <name type="synonym">Four-toed hedgehog</name>
    <dbReference type="NCBI Taxonomy" id="9368"/>
</organismHost>
<organismHost>
    <name type="scientific">Culex tritaeniorhynchus</name>
    <name type="common">Mosquito</name>
    <dbReference type="NCBI Taxonomy" id="7178"/>
</organismHost>
<organismHost>
    <name type="scientific">Halcyon</name>
    <dbReference type="NCBI Taxonomy" id="170865"/>
</organismHost>
<organismHost>
    <name type="scientific">Homo sapiens</name>
    <name type="common">Human</name>
    <dbReference type="NCBI Taxonomy" id="9606"/>
</organismHost>
<organismHost>
    <name type="scientific">Quelea</name>
    <dbReference type="NCBI Taxonomy" id="158617"/>
</organismHost>
<organismHost>
    <name type="scientific">Rhipicephalus</name>
    <dbReference type="NCBI Taxonomy" id="34630"/>
</organismHost>
<dbReference type="EC" id="3.4.21.90" evidence="2"/>
<dbReference type="EMBL" id="Z48163">
    <property type="status" value="NOT_ANNOTATED_CDS"/>
    <property type="molecule type" value="Genomic_RNA"/>
</dbReference>
<dbReference type="SMR" id="P0DJZ6"/>
<dbReference type="Proteomes" id="UP000108382">
    <property type="component" value="Genome"/>
</dbReference>
<dbReference type="GO" id="GO:0030430">
    <property type="term" value="C:host cell cytoplasm"/>
    <property type="evidence" value="ECO:0007669"/>
    <property type="project" value="UniProtKB-SubCell"/>
</dbReference>
<dbReference type="GO" id="GO:0042025">
    <property type="term" value="C:host cell nucleus"/>
    <property type="evidence" value="ECO:0007669"/>
    <property type="project" value="UniProtKB-SubCell"/>
</dbReference>
<dbReference type="GO" id="GO:0020002">
    <property type="term" value="C:host cell plasma membrane"/>
    <property type="evidence" value="ECO:0007669"/>
    <property type="project" value="UniProtKB-SubCell"/>
</dbReference>
<dbReference type="GO" id="GO:0016020">
    <property type="term" value="C:membrane"/>
    <property type="evidence" value="ECO:0007669"/>
    <property type="project" value="UniProtKB-KW"/>
</dbReference>
<dbReference type="GO" id="GO:0039619">
    <property type="term" value="C:T=4 icosahedral viral capsid"/>
    <property type="evidence" value="ECO:0007669"/>
    <property type="project" value="UniProtKB-KW"/>
</dbReference>
<dbReference type="GO" id="GO:0019031">
    <property type="term" value="C:viral envelope"/>
    <property type="evidence" value="ECO:0007669"/>
    <property type="project" value="UniProtKB-KW"/>
</dbReference>
<dbReference type="GO" id="GO:0055036">
    <property type="term" value="C:virion membrane"/>
    <property type="evidence" value="ECO:0007669"/>
    <property type="project" value="UniProtKB-SubCell"/>
</dbReference>
<dbReference type="GO" id="GO:0004252">
    <property type="term" value="F:serine-type endopeptidase activity"/>
    <property type="evidence" value="ECO:0007669"/>
    <property type="project" value="InterPro"/>
</dbReference>
<dbReference type="GO" id="GO:0005198">
    <property type="term" value="F:structural molecule activity"/>
    <property type="evidence" value="ECO:0007669"/>
    <property type="project" value="InterPro"/>
</dbReference>
<dbReference type="GO" id="GO:0075512">
    <property type="term" value="P:clathrin-dependent endocytosis of virus by host cell"/>
    <property type="evidence" value="ECO:0007669"/>
    <property type="project" value="UniProtKB-KW"/>
</dbReference>
<dbReference type="GO" id="GO:0039654">
    <property type="term" value="P:fusion of virus membrane with host endosome membrane"/>
    <property type="evidence" value="ECO:0007669"/>
    <property type="project" value="UniProtKB-KW"/>
</dbReference>
<dbReference type="GO" id="GO:0006508">
    <property type="term" value="P:proteolysis"/>
    <property type="evidence" value="ECO:0007669"/>
    <property type="project" value="UniProtKB-KW"/>
</dbReference>
<dbReference type="GO" id="GO:0039722">
    <property type="term" value="P:symbiont-mediated suppression of host toll-like receptor signaling pathway"/>
    <property type="evidence" value="ECO:0000250"/>
    <property type="project" value="UniProtKB"/>
</dbReference>
<dbReference type="GO" id="GO:0075523">
    <property type="term" value="P:viral translational frameshifting"/>
    <property type="evidence" value="ECO:0007669"/>
    <property type="project" value="UniProtKB-KW"/>
</dbReference>
<dbReference type="GO" id="GO:0019062">
    <property type="term" value="P:virion attachment to host cell"/>
    <property type="evidence" value="ECO:0007669"/>
    <property type="project" value="UniProtKB-KW"/>
</dbReference>
<dbReference type="FunFam" id="1.10.287.2230:FF:000001">
    <property type="entry name" value="Structural polyprotein"/>
    <property type="match status" value="1"/>
</dbReference>
<dbReference type="FunFam" id="2.40.10.10:FF:000075">
    <property type="entry name" value="Structural polyprotein"/>
    <property type="match status" value="1"/>
</dbReference>
<dbReference type="FunFam" id="2.40.10.10:FF:000076">
    <property type="entry name" value="Structural polyprotein"/>
    <property type="match status" value="1"/>
</dbReference>
<dbReference type="Gene3D" id="1.10.287.2230">
    <property type="match status" value="1"/>
</dbReference>
<dbReference type="Gene3D" id="2.60.40.3200">
    <property type="entry name" value="Alphavirus E2 glycoprotein, A domain"/>
    <property type="match status" value="1"/>
</dbReference>
<dbReference type="Gene3D" id="2.60.40.4310">
    <property type="entry name" value="Alphavirus E2 glycoprotein, domain B"/>
    <property type="match status" value="1"/>
</dbReference>
<dbReference type="Gene3D" id="2.60.40.2400">
    <property type="entry name" value="Alphavirus E2 glycoprotein, domain C"/>
    <property type="match status" value="1"/>
</dbReference>
<dbReference type="Gene3D" id="2.40.10.10">
    <property type="entry name" value="Trypsin-like serine proteases"/>
    <property type="match status" value="2"/>
</dbReference>
<dbReference type="InterPro" id="IPR002548">
    <property type="entry name" value="Alpha_E1_glycop"/>
</dbReference>
<dbReference type="InterPro" id="IPR000936">
    <property type="entry name" value="Alpha_E2_glycop"/>
</dbReference>
<dbReference type="InterPro" id="IPR002533">
    <property type="entry name" value="Alpha_E3_glycop"/>
</dbReference>
<dbReference type="InterPro" id="IPR042304">
    <property type="entry name" value="Alphavir_E2_A"/>
</dbReference>
<dbReference type="InterPro" id="IPR042305">
    <property type="entry name" value="Alphavir_E2_B"/>
</dbReference>
<dbReference type="InterPro" id="IPR042306">
    <property type="entry name" value="Alphavir_E2_C"/>
</dbReference>
<dbReference type="InterPro" id="IPR009003">
    <property type="entry name" value="Peptidase_S1_PA"/>
</dbReference>
<dbReference type="InterPro" id="IPR043504">
    <property type="entry name" value="Peptidase_S1_PA_chymotrypsin"/>
</dbReference>
<dbReference type="InterPro" id="IPR000930">
    <property type="entry name" value="Peptidase_S3"/>
</dbReference>
<dbReference type="Pfam" id="PF01589">
    <property type="entry name" value="Alpha_E1_glycop"/>
    <property type="match status" value="1"/>
</dbReference>
<dbReference type="Pfam" id="PF00943">
    <property type="entry name" value="Alpha_E2_glycop"/>
    <property type="match status" value="1"/>
</dbReference>
<dbReference type="Pfam" id="PF01563">
    <property type="entry name" value="Alpha_E3_glycop"/>
    <property type="match status" value="1"/>
</dbReference>
<dbReference type="Pfam" id="PF00944">
    <property type="entry name" value="Peptidase_S3"/>
    <property type="match status" value="1"/>
</dbReference>
<dbReference type="PRINTS" id="PR00798">
    <property type="entry name" value="TOGAVIRIN"/>
</dbReference>
<dbReference type="SUPFAM" id="SSF50494">
    <property type="entry name" value="Trypsin-like serine proteases"/>
    <property type="match status" value="1"/>
</dbReference>
<dbReference type="PROSITE" id="PS51690">
    <property type="entry name" value="ALPHAVIRUS_CP"/>
    <property type="match status" value="1"/>
</dbReference>
<sequence length="830" mass="92349">MNYIPTQTFYGRRWRPRPAARPWPLQATPVAPVVPDFQAQQMQQLISAVNALTMRQNAIAPARPPKPKKKKTTKPKPKTQPKKINGKTQQQKKKDKQADKKKKKPGKRERMCMKIENDCIFEVKHEGKVTGYACLVGDKVMKPAHVKGVIDNADLAKLAFKKSSKYDLECAQIPVHMRSDASKYTHEKPEGHYNWHHGAVQYSGGRFTIPTGAGKPGDSGRPIFDNKGRVVAIVLGGANEGSRTALSVVTWNKDMVTRVTPEGSEEWSAPLITAMCVLANATFPCFQPPCVPCCYENNAEATLRMLEDNVDRPGYYDLLQAALTCRNGTRHRRSVSQHFNVYKATRPYIAYCADCGAGHSCHSPVAIEAVRSEATDGMLKIQFSAQIGIDKSDNHDYTKIRYADGHAIENAVRSSLKVATSGDCFVHGTMGHFILAKCPPGEFLQVSIQDTRNAVRACRIQYHHDPQPVGREKFTIRPHYGKEIPCTTYQQTTAETVEEIDMHMPPDTPDRTLLSQQSGNVKITVGGKKVKYNCTCGTGNVGTTNSDMTINTCLIEQCHVSVTDHKKWQFNSPFVPRADEPARKGKVHIPFPLDNITCRVPMAREPTVIHGKREVTLHLHPDHPTLFSYRTLGEDPQYHEEWVTAAVERTIPVPVDGMEYHWGNNDPVRLWSQLTTEGKPHGWPHQIVQYYYGLYPAATVSAVVGMSLLALISIFASCYMLVAARSKCLTPYALTPGAAVPWTLGILCCAPRAHAASVAETMAYLWDQNQALFWLEFAAPVACILIITYCLRNVLCCCKSLSFLSATEPRGHRQSLRTFDSNAERGGVPV</sequence>
<protein>
    <recommendedName>
        <fullName>Frameshifted structural polyprotein</fullName>
    </recommendedName>
    <alternativeName>
        <fullName>p130</fullName>
    </alternativeName>
    <component>
        <recommendedName>
            <fullName>Capsid protein</fullName>
            <ecNumber evidence="2">3.4.21.90</ecNumber>
        </recommendedName>
        <alternativeName>
            <fullName>Coat protein</fullName>
            <shortName>C</shortName>
        </alternativeName>
    </component>
    <component>
        <recommendedName>
            <fullName>p62</fullName>
        </recommendedName>
        <alternativeName>
            <fullName>E3/E2</fullName>
        </alternativeName>
    </component>
    <component>
        <recommendedName>
            <fullName>Protein E3</fullName>
        </recommendedName>
        <alternativeName>
            <fullName>Spike glycoprotein E3</fullName>
        </alternativeName>
    </component>
    <component>
        <recommendedName>
            <fullName>Envelope glycoprotein E2</fullName>
        </recommendedName>
        <alternativeName>
            <fullName>Spike glycoprotein E2</fullName>
        </alternativeName>
    </component>
    <component>
        <recommendedName>
            <fullName>Protein TF</fullName>
        </recommendedName>
    </component>
</protein>
<feature type="chain" id="PRO_0000434879" description="Capsid protein" evidence="2">
    <location>
        <begin position="1"/>
        <end position="267"/>
    </location>
</feature>
<feature type="chain" id="PRO_0000434880" description="p62" evidence="2">
    <location>
        <begin position="268"/>
        <end position="755"/>
    </location>
</feature>
<feature type="chain" id="PRO_0000434881" description="Protein E3" evidence="2">
    <location>
        <begin position="268"/>
        <end position="333"/>
    </location>
</feature>
<feature type="chain" id="PRO_0000434882" description="Envelope glycoprotein E2" evidence="2">
    <location>
        <begin position="334"/>
        <end position="755"/>
    </location>
</feature>
<feature type="chain" id="PRO_0000434883" description="Protein TF" evidence="2">
    <location>
        <begin position="756"/>
        <end position="830"/>
    </location>
</feature>
<feature type="transmembrane region" description="Helical" evidence="8">
    <location>
        <begin position="702"/>
        <end position="722"/>
    </location>
</feature>
<feature type="transmembrane region" description="Helical" evidence="8">
    <location>
        <begin position="771"/>
        <end position="791"/>
    </location>
</feature>
<feature type="transmembrane region" description="Helical" evidence="8">
    <location>
        <begin position="793"/>
        <end position="813"/>
    </location>
</feature>
<feature type="domain" description="Peptidase S3" evidence="9">
    <location>
        <begin position="119"/>
        <end position="267"/>
    </location>
</feature>
<feature type="region of interest" description="Disordered" evidence="10">
    <location>
        <begin position="58"/>
        <end position="109"/>
    </location>
</feature>
<feature type="region of interest" description="Ribosome-binding" evidence="2">
    <location>
        <begin position="94"/>
        <end position="106"/>
    </location>
</feature>
<feature type="region of interest" description="Transient transmembrane before p62-6K protein processing" evidence="8">
    <location>
        <begin position="728"/>
        <end position="748"/>
    </location>
</feature>
<feature type="compositionally biased region" description="Basic residues" evidence="10">
    <location>
        <begin position="65"/>
        <end position="107"/>
    </location>
</feature>
<feature type="active site" description="Charge relay system" evidence="9">
    <location>
        <position position="145"/>
    </location>
</feature>
<feature type="active site" description="Charge relay system" evidence="4">
    <location>
        <position position="167"/>
    </location>
</feature>
<feature type="active site" description="Charge relay system" evidence="9">
    <location>
        <position position="219"/>
    </location>
</feature>
<feature type="site" description="Cleavage; by capsid protein" evidence="2">
    <location>
        <begin position="267"/>
        <end position="268"/>
    </location>
</feature>
<feature type="site" description="Cleavage; by host furin" evidence="2">
    <location>
        <begin position="333"/>
        <end position="334"/>
    </location>
</feature>
<feature type="site" description="Cleavage; by host signal peptidase" evidence="2">
    <location>
        <begin position="755"/>
        <end position="756"/>
    </location>
</feature>
<feature type="lipid moiety-binding region" description="S-palmitoyl cysteine; by host" evidence="8">
    <location>
        <position position="718"/>
    </location>
</feature>
<feature type="lipid moiety-binding region" description="S-palmitoyl cysteine; by host" evidence="1">
    <location>
        <position position="728"/>
    </location>
</feature>
<feature type="lipid moiety-binding region" description="S-palmitoyl cysteine; by host" evidence="1">
    <location>
        <position position="748"/>
    </location>
</feature>
<feature type="lipid moiety-binding region" description="S-palmitoyl cysteine; by host" evidence="1">
    <location>
        <position position="749"/>
    </location>
</feature>
<feature type="glycosylation site" description="N-linked (GlcNAc...) asparagine; by host" evidence="8">
    <location>
        <position position="280"/>
    </location>
</feature>
<feature type="glycosylation site" description="N-linked (GlcNAc...) asparagine; by host" evidence="8">
    <location>
        <position position="327"/>
    </location>
</feature>
<feature type="glycosylation site" description="N-linked (GlcNAc...) asparagine; by host" evidence="8">
    <location>
        <position position="533"/>
    </location>
</feature>
<feature type="glycosylation site" description="N-linked (GlcNAc...) asparagine; by host" evidence="8">
    <location>
        <position position="595"/>
    </location>
</feature>
<feature type="disulfide bond" evidence="2">
    <location>
        <begin position="119"/>
        <end position="134"/>
    </location>
</feature>
<feature type="mutagenesis site" description="Loss of autocatalytic cleavage by capsid protein." evidence="15">
    <original>SG</original>
    <variation>RST</variation>
    <location>
        <begin position="219"/>
        <end position="220"/>
    </location>
</feature>
<feature type="mutagenesis site" description="Complete loss of p62 precursor processing." evidence="13">
    <original>R</original>
    <variation>S</variation>
    <location>
        <position position="330"/>
    </location>
</feature>
<feature type="mutagenesis site" description="Complete loss of p62 precursor processing." evidence="13">
    <original>R</original>
    <variation>F</variation>
    <location>
        <position position="333"/>
    </location>
</feature>
<name>POLSF_SFV</name>
<accession>P0DJZ6</accession>
<keyword id="KW-0068">Autocatalytic cleavage</keyword>
<keyword id="KW-0167">Capsid protein</keyword>
<keyword id="KW-1165">Clathrin-mediated endocytosis of virus by host</keyword>
<keyword id="KW-0165">Cleavage on pair of basic residues</keyword>
<keyword id="KW-1015">Disulfide bond</keyword>
<keyword id="KW-1170">Fusion of virus membrane with host endosomal membrane</keyword>
<keyword id="KW-1168">Fusion of virus membrane with host membrane</keyword>
<keyword id="KW-0325">Glycoprotein</keyword>
<keyword id="KW-1032">Host cell membrane</keyword>
<keyword id="KW-1035">Host cytoplasm</keyword>
<keyword id="KW-1043">Host membrane</keyword>
<keyword id="KW-1048">Host nucleus</keyword>
<keyword id="KW-0945">Host-virus interaction</keyword>
<keyword id="KW-0378">Hydrolase</keyword>
<keyword id="KW-0449">Lipoprotein</keyword>
<keyword id="KW-0472">Membrane</keyword>
<keyword id="KW-0564">Palmitate</keyword>
<keyword id="KW-0645">Protease</keyword>
<keyword id="KW-0688">Ribosomal frameshifting</keyword>
<keyword id="KW-0720">Serine protease</keyword>
<keyword id="KW-1144">T=4 icosahedral capsid protein</keyword>
<keyword id="KW-0812">Transmembrane</keyword>
<keyword id="KW-1133">Transmembrane helix</keyword>
<keyword id="KW-1161">Viral attachment to host cell</keyword>
<keyword id="KW-0261">Viral envelope protein</keyword>
<keyword id="KW-1162">Viral penetration into host cytoplasm</keyword>
<keyword id="KW-0946">Virion</keyword>
<keyword id="KW-1164">Virus endocytosis by host</keyword>
<keyword id="KW-1160">Virus entry into host cell</keyword>
<comment type="function">
    <molecule>Capsid protein</molecule>
    <text evidence="2 3 6">Forms an icosahedral capsid with a T=4 symmetry composed of 240 copies of the capsid protein surrounded by a lipid membrane through which penetrate 80 spikes composed of trimers of E1-E2 heterodimers (By similarity). The capsid protein binds to the viral RNA genome at a site adjacent to a ribosome binding site for viral genome translation following genome release (By similarity). Possesses a protease activity that results in its autocatalytic cleavage from the nascent structural protein (By similarity). Following its self-cleavage, the capsid protein transiently associates with ribosomes, and within several minutes the protein binds to viral RNA and rapidly assembles into icosahedric core particles (By similarity). The resulting nucleocapsid eventually associates with the cytoplasmic domain of the spike glycoprotein E2 at the cell membrane, leading to budding and formation of mature virions (By similarity). In case of infection, new virions attach to target cells and after clathrin-mediated endocytosis their membrane fuses with the host endosomal membrane (By similarity). This leads to the release of the nucleocapsid into the cytoplasm, followed by an uncoating event necessary for the genomic RNA to become accessible (By similarity). The uncoating might be triggered by the interaction of capsid proteins with ribosomes (By similarity). Binding of ribosomes would release the genomic RNA since the same region is genomic RNA-binding and ribosome-binding (By similarity). Specifically inhibits interleukin-1 receptor-associated kinase 1/IRAK1-dependent signaling during viral entry, representing a means by which the alphaviruses may evade innate immune detection and activation prior to viral gene expression (By similarity).</text>
</comment>
<comment type="function">
    <molecule>Protein E3</molecule>
    <text evidence="14">Provides the signal sequence for p62 (E3/E2) translocation to the host endoplasmic reticulum. Mediates pH protection of E1 during secretory pathway trans- port.</text>
</comment>
<comment type="function">
    <molecule>Envelope glycoprotein E2</molecule>
    <text evidence="11">Plays a role in viral attachment to target host cell, by binding to the cell receptor. Synthesized as a p62 precursor which is processed by furin at the cell membrane just before virion budding, giving rise to E2-E1 heterodimer. The p62-E1 heterodimer is stable, whereas E2-E1 is unstable and dissociate at low pH. p62 is processed at the last step, presumably to avoid E1 fusion activation before its final export to cell surface. E2 C-terminus contains a transitory transmembrane that would be disrupted by palmitoylation, resulting in reorientation of the C-terminal tail from lumenal to cytoplasmic side. This step is critical since E2 C-terminus is involved in budding by interacting with capsid proteins. This release of E2 C-terminus in cytoplasm occurs lately in protein export, and precludes premature assembly of particles at the endoplasmic reticulum membrane.</text>
</comment>
<comment type="function">
    <molecule>Protein TF</molecule>
    <text evidence="12">Virion component that may play a role during viral assembly.</text>
</comment>
<comment type="catalytic activity">
    <reaction evidence="2">
        <text>Autocatalytic release of the core protein from the N-terminus of the togavirus structural polyprotein by hydrolysis of a -Trp-|-Ser- bond.</text>
        <dbReference type="EC" id="3.4.21.90"/>
    </reaction>
</comment>
<comment type="subunit">
    <molecule>Capsid protein</molecule>
    <text evidence="3 5 7 16">Homodimer (By similarity). Homomultimer (Probable). Interacts with host karyopherin KPNA4; this interaction allows the nuclear import of the viral capsid protein (By similarity). Precursor of protein E3/E2: The precursor of protein E3/E2 and E1 form a heterodimer shortly after synthesis (By similarity). Interacts with host IRAK1; the interaction leads to inhibition of IRAK1-dependent signaling (By similarity).</text>
</comment>
<comment type="subunit">
    <molecule>Envelope glycoprotein E2</molecule>
    <text evidence="3 5 7 16">Processing of the precursor of protein E3/E2 into E2 and E3 results in a heterodimer of the spike glycoproteins E2 and E1 (By similarity). Spike at virion surface are constituted of three E2-E1 heterodimers (By similarity). Interacts with 6K protein (By similarity). Interacts with host MXRA8; this interaction mediates virus entry (By similarity).</text>
</comment>
<comment type="subcellular location">
    <molecule>Capsid protein</molecule>
    <subcellularLocation>
        <location evidence="3">Virion</location>
    </subcellularLocation>
    <subcellularLocation>
        <location evidence="7">Host cytoplasm</location>
    </subcellularLocation>
    <subcellularLocation>
        <location evidence="3">Host cell membrane</location>
    </subcellularLocation>
    <subcellularLocation>
        <location evidence="7">Host nucleus</location>
    </subcellularLocation>
    <text evidence="7">Shuttles between the cytoplasm and the nucleus.</text>
</comment>
<comment type="subcellular location">
    <molecule>p62</molecule>
    <subcellularLocation>
        <location evidence="1">Virion membrane</location>
        <topology evidence="1">Single-pass type I membrane protein</topology>
    </subcellularLocation>
    <subcellularLocation>
        <location evidence="1">Host cell membrane</location>
        <topology evidence="1">Single-pass type I membrane protein</topology>
    </subcellularLocation>
</comment>
<comment type="subcellular location">
    <molecule>Envelope glycoprotein E2</molecule>
    <subcellularLocation>
        <location evidence="1">Virion membrane</location>
        <topology evidence="1">Single-pass type I membrane protein</topology>
    </subcellularLocation>
    <subcellularLocation>
        <location evidence="1">Host cell membrane</location>
        <topology evidence="1">Single-pass type I membrane protein</topology>
    </subcellularLocation>
</comment>
<comment type="subcellular location">
    <molecule>Protein TF</molecule>
    <subcellularLocation>
        <location evidence="12">Virion</location>
    </subcellularLocation>
</comment>
<comment type="alternative products">
    <event type="ribosomal frameshifting"/>
    <isoform>
        <id>P0DJZ6-1</id>
        <name>Frameshifted structural polyprotein</name>
        <sequence type="displayed"/>
    </isoform>
    <isoform>
        <id>P03315-1</id>
        <name>Structural polyprotein</name>
        <sequence type="external"/>
    </isoform>
</comment>
<comment type="domain">
    <molecule>Capsid protein</molecule>
    <text evidence="3 7">The N-terminus contains a nuclear localization signal and a CRM1-mediated nuclear export signal (By similarity). The C-terminus functions as a protease during translation to cleave itself from the translating structural polyprotein (By similarity).</text>
</comment>
<comment type="PTM">
    <molecule>Isoform Frameshifted structural polyprotein</molecule>
    <text evidence="2">Specific enzymatic cleavages in vivo yield mature proteins. Capsid protein is auto-cleaved during polyprotein translation, unmasking a signal peptide at the N-terminus of the precursor of E3/E2 (By similarity). The remaining polyprotein is then targeted to the host endoplasmic reticulum, where host signal peptidase cleaves it into pE2 and TF. pE2 is further processed to mature E3 and E2 by host furin in trans-Golgi vesicle (By similarity).</text>
</comment>
<comment type="miscellaneous">
    <molecule>Isoform Frameshifted structural polyprotein</molecule>
    <text>Produced by -1 ribosomal frameshifting in 6K protein ORF.</text>
</comment>
<organism>
    <name type="scientific">Semliki forest virus</name>
    <name type="common">SFV</name>
    <dbReference type="NCBI Taxonomy" id="11033"/>
    <lineage>
        <taxon>Viruses</taxon>
        <taxon>Riboviria</taxon>
        <taxon>Orthornavirae</taxon>
        <taxon>Kitrinoviricota</taxon>
        <taxon>Alsuviricetes</taxon>
        <taxon>Martellivirales</taxon>
        <taxon>Togaviridae</taxon>
        <taxon>Alphavirus</taxon>
    </lineage>
</organism>
<proteinExistence type="evidence at protein level"/>
<reference key="1">
    <citation type="journal article" date="1997" name="J. Gen. Virol.">
        <title>Sequence analysis of the avirulent, demyelinating A7 strain of Semliki Forest virus.</title>
        <authorList>
            <person name="Tarbatt C.J."/>
            <person name="Glasgow G.M."/>
            <person name="Mooney D.A."/>
            <person name="Sheahan B.J."/>
            <person name="Atkins G.J."/>
        </authorList>
    </citation>
    <scope>NUCLEOTIDE SEQUENCE [GENOMIC RNA]</scope>
    <source>
        <strain>A7</strain>
    </source>
</reference>
<reference key="2">
    <citation type="journal article" date="1987" name="J. Virol.">
        <title>Processing of the Semliki Forest virus structural polyprotein: role of the capsid protease.</title>
        <authorList>
            <person name="Melancon P."/>
            <person name="Garoff H."/>
        </authorList>
    </citation>
    <scope>FUNCTION (CAPSID PROTEIN)</scope>
    <scope>AUTOCATALYTIC CLEAVAGE BY CAPSID PROTEIN</scope>
    <scope>MUTAGENESIS OF 219-SER-GLY-220</scope>
</reference>
<reference key="3">
    <citation type="journal article" date="1991" name="EMBO J.">
        <title>The cytoplasmic domain of alphavirus E2 glycoprotein contains a short linear recognition signal required for viral budding.</title>
        <authorList>
            <person name="Kail M."/>
            <person name="Hollinshead M."/>
            <person name="Ansorge W."/>
            <person name="Pepperkok R."/>
            <person name="Frank R."/>
            <person name="Griffiths G."/>
            <person name="Vaux D."/>
        </authorList>
    </citation>
    <scope>FUNCTION (ENVELOPE GLYCOPROTEIN E2)</scope>
</reference>
<reference key="4">
    <citation type="journal article" date="1991" name="J. Biol. Chem.">
        <title>Processing of the p62 envelope precursor protein of Semliki Forest virus.</title>
        <authorList>
            <person name="Jain S.K."/>
            <person name="DeCandido S."/>
            <person name="Kielian M."/>
        </authorList>
    </citation>
    <scope>CLEAVAGE SITE OF P62</scope>
    <scope>MUTAGENESIS OF ARG-330 AND ARG-333</scope>
</reference>
<reference key="5">
    <citation type="journal article" date="1998" name="J. Mol. Biol.">
        <title>Role of the C-terminal tryptophan residue for the structure-function of the alphavirus capsid protein.</title>
        <authorList>
            <person name="Skoging U."/>
            <person name="Liljestrom P."/>
        </authorList>
    </citation>
    <scope>FUNCTION (CAPSID PROTEIN)</scope>
    <scope>AUTOCATALYTIC CLEAVAGE BY CAPSID PROTEIN</scope>
</reference>
<reference key="6">
    <citation type="journal article" date="2003" name="J. Virol.">
        <title>Furin processing and proteolytic activation of Semliki Forest virus.</title>
        <authorList>
            <person name="Zhang X."/>
            <person name="Fugere M."/>
            <person name="Day R."/>
            <person name="Kielian M."/>
        </authorList>
    </citation>
    <scope>PROTEOLYTIC PROCESSING OF P62 BY HOST FURIN</scope>
</reference>
<reference key="7">
    <citation type="journal article" date="2008" name="Virol. J.">
        <title>Discovery of frameshifting in Alphavirus 6K resolves a 20-year enigma.</title>
        <authorList>
            <person name="Firth A.E."/>
            <person name="Chung B.Y."/>
            <person name="Fleeton M.N."/>
            <person name="Atkins J.F."/>
        </authorList>
    </citation>
    <scope>FUNCTION (PROTEIN TF)</scope>
    <scope>SUBCELLULAR LOCATION (PROTEIN TF)</scope>
</reference>
<reference key="8">
    <citation type="journal article" date="2013" name="J. Virol.">
        <title>The role of E3 in pH protection during alphavirus assembly and exit.</title>
        <authorList>
            <person name="Uchime O."/>
            <person name="Fields W."/>
            <person name="Kielian M."/>
        </authorList>
    </citation>
    <scope>FUNCTION (PROTEIN E3)</scope>
</reference>